<reference key="1">
    <citation type="journal article" date="2000" name="DNA Res.">
        <title>Structural analysis of Arabidopsis thaliana chromosome 3. I. Sequence features of the regions of 4,504,864 bp covered by sixty P1 and TAC clones.</title>
        <authorList>
            <person name="Sato S."/>
            <person name="Nakamura Y."/>
            <person name="Kaneko T."/>
            <person name="Katoh T."/>
            <person name="Asamizu E."/>
            <person name="Tabata S."/>
        </authorList>
    </citation>
    <scope>NUCLEOTIDE SEQUENCE [LARGE SCALE GENOMIC DNA]</scope>
    <source>
        <strain>cv. Columbia</strain>
    </source>
</reference>
<reference key="2">
    <citation type="journal article" date="2017" name="Plant J.">
        <title>Araport11: a complete reannotation of the Arabidopsis thaliana reference genome.</title>
        <authorList>
            <person name="Cheng C.Y."/>
            <person name="Krishnakumar V."/>
            <person name="Chan A.P."/>
            <person name="Thibaud-Nissen F."/>
            <person name="Schobel S."/>
            <person name="Town C.D."/>
        </authorList>
    </citation>
    <scope>GENOME REANNOTATION</scope>
    <source>
        <strain>cv. Columbia</strain>
    </source>
</reference>
<reference key="3">
    <citation type="journal article" date="2003" name="Science">
        <title>Empirical analysis of transcriptional activity in the Arabidopsis genome.</title>
        <authorList>
            <person name="Yamada K."/>
            <person name="Lim J."/>
            <person name="Dale J.M."/>
            <person name="Chen H."/>
            <person name="Shinn P."/>
            <person name="Palm C.J."/>
            <person name="Southwick A.M."/>
            <person name="Wu H.C."/>
            <person name="Kim C.J."/>
            <person name="Nguyen M."/>
            <person name="Pham P.K."/>
            <person name="Cheuk R.F."/>
            <person name="Karlin-Newmann G."/>
            <person name="Liu S.X."/>
            <person name="Lam B."/>
            <person name="Sakano H."/>
            <person name="Wu T."/>
            <person name="Yu G."/>
            <person name="Miranda M."/>
            <person name="Quach H.L."/>
            <person name="Tripp M."/>
            <person name="Chang C.H."/>
            <person name="Lee J.M."/>
            <person name="Toriumi M.J."/>
            <person name="Chan M.M."/>
            <person name="Tang C.C."/>
            <person name="Onodera C.S."/>
            <person name="Deng J.M."/>
            <person name="Akiyama K."/>
            <person name="Ansari Y."/>
            <person name="Arakawa T."/>
            <person name="Banh J."/>
            <person name="Banno F."/>
            <person name="Bowser L."/>
            <person name="Brooks S.Y."/>
            <person name="Carninci P."/>
            <person name="Chao Q."/>
            <person name="Choy N."/>
            <person name="Enju A."/>
            <person name="Goldsmith A.D."/>
            <person name="Gurjal M."/>
            <person name="Hansen N.F."/>
            <person name="Hayashizaki Y."/>
            <person name="Johnson-Hopson C."/>
            <person name="Hsuan V.W."/>
            <person name="Iida K."/>
            <person name="Karnes M."/>
            <person name="Khan S."/>
            <person name="Koesema E."/>
            <person name="Ishida J."/>
            <person name="Jiang P.X."/>
            <person name="Jones T."/>
            <person name="Kawai J."/>
            <person name="Kamiya A."/>
            <person name="Meyers C."/>
            <person name="Nakajima M."/>
            <person name="Narusaka M."/>
            <person name="Seki M."/>
            <person name="Sakurai T."/>
            <person name="Satou M."/>
            <person name="Tamse R."/>
            <person name="Vaysberg M."/>
            <person name="Wallender E.K."/>
            <person name="Wong C."/>
            <person name="Yamamura Y."/>
            <person name="Yuan S."/>
            <person name="Shinozaki K."/>
            <person name="Davis R.W."/>
            <person name="Theologis A."/>
            <person name="Ecker J.R."/>
        </authorList>
    </citation>
    <scope>NUCLEOTIDE SEQUENCE [LARGE SCALE MRNA]</scope>
    <source>
        <strain>cv. Columbia</strain>
    </source>
</reference>
<reference key="4">
    <citation type="journal article" date="2009" name="Plant Mol. Biol.">
        <title>Arabidopsis mutants reveal multiple singlet oxygen signaling pathways involved in stress response and development.</title>
        <authorList>
            <person name="Baruah A."/>
            <person name="Simkova K."/>
            <person name="Apel K."/>
            <person name="Laloi C."/>
        </authorList>
    </citation>
    <scope>INDUCTION BY SINGLET OXYGEN</scope>
    <source>
        <strain>cv. Columbia</strain>
    </source>
</reference>
<accession>Q9LJJ7</accession>
<gene>
    <name evidence="6" type="ordered locus">At3g28580</name>
    <name evidence="7" type="ORF">MZN14.5</name>
</gene>
<dbReference type="EC" id="3.6.1.-" evidence="1"/>
<dbReference type="EMBL" id="AP000420">
    <property type="protein sequence ID" value="BAB02174.1"/>
    <property type="molecule type" value="Genomic_DNA"/>
</dbReference>
<dbReference type="EMBL" id="CP002686">
    <property type="protein sequence ID" value="AEE77462.1"/>
    <property type="molecule type" value="Genomic_DNA"/>
</dbReference>
<dbReference type="EMBL" id="AY072076">
    <property type="protein sequence ID" value="AAL59899.1"/>
    <property type="molecule type" value="mRNA"/>
</dbReference>
<dbReference type="RefSeq" id="NP_189499.1">
    <property type="nucleotide sequence ID" value="NM_113778.3"/>
</dbReference>
<dbReference type="SMR" id="Q9LJJ7"/>
<dbReference type="FunCoup" id="Q9LJJ7">
    <property type="interactions" value="1410"/>
</dbReference>
<dbReference type="STRING" id="3702.Q9LJJ7"/>
<dbReference type="SwissPalm" id="Q9LJJ7"/>
<dbReference type="PaxDb" id="3702-AT3G28580.1"/>
<dbReference type="ProteomicsDB" id="244563"/>
<dbReference type="EnsemblPlants" id="AT3G28580.1">
    <property type="protein sequence ID" value="AT3G28580.1"/>
    <property type="gene ID" value="AT3G28580"/>
</dbReference>
<dbReference type="GeneID" id="822488"/>
<dbReference type="Gramene" id="AT3G28580.1">
    <property type="protein sequence ID" value="AT3G28580.1"/>
    <property type="gene ID" value="AT3G28580"/>
</dbReference>
<dbReference type="KEGG" id="ath:AT3G28580"/>
<dbReference type="Araport" id="AT3G28580"/>
<dbReference type="TAIR" id="AT3G28580"/>
<dbReference type="eggNOG" id="KOG0743">
    <property type="taxonomic scope" value="Eukaryota"/>
</dbReference>
<dbReference type="HOGENOM" id="CLU_010189_0_1_1"/>
<dbReference type="InParanoid" id="Q9LJJ7"/>
<dbReference type="PhylomeDB" id="Q9LJJ7"/>
<dbReference type="PRO" id="PR:Q9LJJ7"/>
<dbReference type="Proteomes" id="UP000006548">
    <property type="component" value="Chromosome 3"/>
</dbReference>
<dbReference type="ExpressionAtlas" id="Q9LJJ7">
    <property type="expression patterns" value="baseline and differential"/>
</dbReference>
<dbReference type="GO" id="GO:0005783">
    <property type="term" value="C:endoplasmic reticulum"/>
    <property type="evidence" value="ECO:0007005"/>
    <property type="project" value="TAIR"/>
</dbReference>
<dbReference type="GO" id="GO:0016020">
    <property type="term" value="C:membrane"/>
    <property type="evidence" value="ECO:0007669"/>
    <property type="project" value="UniProtKB-SubCell"/>
</dbReference>
<dbReference type="GO" id="GO:0005524">
    <property type="term" value="F:ATP binding"/>
    <property type="evidence" value="ECO:0007669"/>
    <property type="project" value="UniProtKB-KW"/>
</dbReference>
<dbReference type="GO" id="GO:0016887">
    <property type="term" value="F:ATP hydrolysis activity"/>
    <property type="evidence" value="ECO:0007669"/>
    <property type="project" value="InterPro"/>
</dbReference>
<dbReference type="GO" id="GO:0009737">
    <property type="term" value="P:response to abscisic acid"/>
    <property type="evidence" value="ECO:0000270"/>
    <property type="project" value="TAIR"/>
</dbReference>
<dbReference type="GO" id="GO:0000304">
    <property type="term" value="P:response to singlet oxygen"/>
    <property type="evidence" value="ECO:0000270"/>
    <property type="project" value="UniProtKB"/>
</dbReference>
<dbReference type="CDD" id="cd19510">
    <property type="entry name" value="RecA-like_BCS1"/>
    <property type="match status" value="1"/>
</dbReference>
<dbReference type="FunFam" id="3.40.50.300:FF:001122">
    <property type="entry name" value="AAA-ATPase ASD, mitochondrial"/>
    <property type="match status" value="1"/>
</dbReference>
<dbReference type="Gene3D" id="6.10.280.40">
    <property type="match status" value="1"/>
</dbReference>
<dbReference type="Gene3D" id="3.40.50.300">
    <property type="entry name" value="P-loop containing nucleotide triphosphate hydrolases"/>
    <property type="match status" value="1"/>
</dbReference>
<dbReference type="InterPro" id="IPR003593">
    <property type="entry name" value="AAA+_ATPase"/>
</dbReference>
<dbReference type="InterPro" id="IPR025753">
    <property type="entry name" value="AAA_N_dom"/>
</dbReference>
<dbReference type="InterPro" id="IPR003959">
    <property type="entry name" value="ATPase_AAA_core"/>
</dbReference>
<dbReference type="InterPro" id="IPR003960">
    <property type="entry name" value="ATPase_AAA_CS"/>
</dbReference>
<dbReference type="InterPro" id="IPR050747">
    <property type="entry name" value="Mitochondrial_chaperone_BCS1"/>
</dbReference>
<dbReference type="InterPro" id="IPR027417">
    <property type="entry name" value="P-loop_NTPase"/>
</dbReference>
<dbReference type="PANTHER" id="PTHR23070">
    <property type="entry name" value="BCS1 AAA-TYPE ATPASE"/>
    <property type="match status" value="1"/>
</dbReference>
<dbReference type="Pfam" id="PF00004">
    <property type="entry name" value="AAA"/>
    <property type="match status" value="2"/>
</dbReference>
<dbReference type="Pfam" id="PF14363">
    <property type="entry name" value="AAA_assoc"/>
    <property type="match status" value="1"/>
</dbReference>
<dbReference type="SMART" id="SM00382">
    <property type="entry name" value="AAA"/>
    <property type="match status" value="1"/>
</dbReference>
<dbReference type="SUPFAM" id="SSF52540">
    <property type="entry name" value="P-loop containing nucleoside triphosphate hydrolases"/>
    <property type="match status" value="1"/>
</dbReference>
<dbReference type="PROSITE" id="PS00674">
    <property type="entry name" value="AAA"/>
    <property type="match status" value="1"/>
</dbReference>
<protein>
    <recommendedName>
        <fullName>AAA-ATPase At3g28580</fullName>
        <ecNumber evidence="1">3.6.1.-</ecNumber>
    </recommendedName>
</protein>
<proteinExistence type="evidence at transcript level"/>
<name>AATP9_ARATH</name>
<sequence length="500" mass="58509">MAMMGQLWTNTGSALATLMFVYTIFKQFFPLFGPQLEPFLYRLFGRFYPYIQITFHEYSGEHFKRSEAYLGIQSYLSKDSSARAKKLKANTTKGSKSIVLSMDDKEEITDDFEGIRVWWQSKKEGATRQSFSFYPEANEKRYYMLRFHRRDREVIIERYLEHVMREGKTIEQKNRERKLYSNTPGQSHGNNSKWSHVTFEHPATFDTLAMEENKKEEIKSDLIKFSKSKDYYKKIGKAWKRGYLLFGPPGTGKSTMIAAMANFLEYDVYDLELTTVKDNTHLRRLLIETSAKSIIVIEDIDCSLNLTGQRKKKEEEEEDGDDKNTIEKKMMMKNEGENKESKVTLSGLLNFIDGLWSACGGERIIVFTTNFVDKLDPALIRKGRMDKHIEMSYCCFEAFKVLAKNYLDVEESEMFEEIKRLLEVEEIKMTPADVGENLLPKSEKEGGETCLKRLIEALKEEKEEAKKKVEEEEEEKQRKKEKVKEIEAEKEKKKKIEEEN</sequence>
<evidence type="ECO:0000250" key="1">
    <source>
        <dbReference type="UniProtKB" id="Q9FLD5"/>
    </source>
</evidence>
<evidence type="ECO:0000255" key="2"/>
<evidence type="ECO:0000256" key="3">
    <source>
        <dbReference type="SAM" id="MobiDB-lite"/>
    </source>
</evidence>
<evidence type="ECO:0000269" key="4">
    <source>
    </source>
</evidence>
<evidence type="ECO:0000305" key="5"/>
<evidence type="ECO:0000312" key="6">
    <source>
        <dbReference type="EMBL" id="AEE77462.1"/>
    </source>
</evidence>
<evidence type="ECO:0000312" key="7">
    <source>
        <dbReference type="EMBL" id="BAB02174.1"/>
    </source>
</evidence>
<evidence type="ECO:0000312" key="8">
    <source>
        <dbReference type="Proteomes" id="UP000006548"/>
    </source>
</evidence>
<feature type="chain" id="PRO_0000434711" description="AAA-ATPase At3g28580">
    <location>
        <begin position="1"/>
        <end position="500"/>
    </location>
</feature>
<feature type="transmembrane region" description="Helical" evidence="2">
    <location>
        <begin position="7"/>
        <end position="29"/>
    </location>
</feature>
<feature type="region of interest" description="Disordered" evidence="3">
    <location>
        <begin position="174"/>
        <end position="193"/>
    </location>
</feature>
<feature type="region of interest" description="Disordered" evidence="3">
    <location>
        <begin position="462"/>
        <end position="500"/>
    </location>
</feature>
<feature type="compositionally biased region" description="Polar residues" evidence="3">
    <location>
        <begin position="180"/>
        <end position="193"/>
    </location>
</feature>
<feature type="binding site" evidence="2">
    <location>
        <begin position="247"/>
        <end position="254"/>
    </location>
    <ligand>
        <name>ATP</name>
        <dbReference type="ChEBI" id="CHEBI:30616"/>
    </ligand>
</feature>
<comment type="catalytic activity">
    <reaction evidence="1">
        <text>ATP + H2O = ADP + phosphate + H(+)</text>
        <dbReference type="Rhea" id="RHEA:13065"/>
        <dbReference type="ChEBI" id="CHEBI:15377"/>
        <dbReference type="ChEBI" id="CHEBI:15378"/>
        <dbReference type="ChEBI" id="CHEBI:30616"/>
        <dbReference type="ChEBI" id="CHEBI:43474"/>
        <dbReference type="ChEBI" id="CHEBI:456216"/>
    </reaction>
</comment>
<comment type="cofactor">
    <cofactor evidence="1">
        <name>Mg(2+)</name>
        <dbReference type="ChEBI" id="CHEBI:18420"/>
    </cofactor>
</comment>
<comment type="subcellular location">
    <subcellularLocation>
        <location evidence="2">Membrane</location>
        <topology evidence="2">Single-pass membrane protein</topology>
    </subcellularLocation>
</comment>
<comment type="induction">
    <text evidence="4">By singlet oxygen (1)O(2).</text>
</comment>
<comment type="similarity">
    <text evidence="5">Belongs to the AAA ATPase family. BCS1 subfamily.</text>
</comment>
<keyword id="KW-0067">ATP-binding</keyword>
<keyword id="KW-0378">Hydrolase</keyword>
<keyword id="KW-0460">Magnesium</keyword>
<keyword id="KW-0472">Membrane</keyword>
<keyword id="KW-0547">Nucleotide-binding</keyword>
<keyword id="KW-1185">Reference proteome</keyword>
<keyword id="KW-0812">Transmembrane</keyword>
<keyword id="KW-1133">Transmembrane helix</keyword>
<organism evidence="8">
    <name type="scientific">Arabidopsis thaliana</name>
    <name type="common">Mouse-ear cress</name>
    <dbReference type="NCBI Taxonomy" id="3702"/>
    <lineage>
        <taxon>Eukaryota</taxon>
        <taxon>Viridiplantae</taxon>
        <taxon>Streptophyta</taxon>
        <taxon>Embryophyta</taxon>
        <taxon>Tracheophyta</taxon>
        <taxon>Spermatophyta</taxon>
        <taxon>Magnoliopsida</taxon>
        <taxon>eudicotyledons</taxon>
        <taxon>Gunneridae</taxon>
        <taxon>Pentapetalae</taxon>
        <taxon>rosids</taxon>
        <taxon>malvids</taxon>
        <taxon>Brassicales</taxon>
        <taxon>Brassicaceae</taxon>
        <taxon>Camelineae</taxon>
        <taxon>Arabidopsis</taxon>
    </lineage>
</organism>